<keyword id="KW-0963">Cytoplasm</keyword>
<keyword id="KW-0206">Cytoskeleton</keyword>
<keyword id="KW-0539">Nucleus</keyword>
<protein>
    <recommendedName>
        <fullName>Targeting protein for Xklp2 homolog</fullName>
        <shortName evidence="5">TPX2 homolog</shortName>
    </recommendedName>
    <alternativeName>
        <fullName>Microtubule-associated protein TPX2 homolog</fullName>
    </alternativeName>
</protein>
<proteinExistence type="evidence at transcript level"/>
<evidence type="ECO:0000250" key="1">
    <source>
        <dbReference type="UniProtKB" id="A4IH24"/>
    </source>
</evidence>
<evidence type="ECO:0000255" key="2"/>
<evidence type="ECO:0000256" key="3">
    <source>
        <dbReference type="SAM" id="MobiDB-lite"/>
    </source>
</evidence>
<evidence type="ECO:0000269" key="4">
    <source>
    </source>
</evidence>
<evidence type="ECO:0000303" key="5">
    <source>
    </source>
</evidence>
<evidence type="ECO:0000305" key="6"/>
<evidence type="ECO:0000312" key="7">
    <source>
        <dbReference type="EMBL" id="BAJ24842.1"/>
    </source>
</evidence>
<accession>E2RYF8</accession>
<reference evidence="6 7" key="1">
    <citation type="journal article" date="2010" name="J. Cell Sci.">
        <title>A single starfish Aurora kinase performs the combined functions of Aurora-A and Aurora-B in human cells.</title>
        <authorList>
            <person name="Abe Y."/>
            <person name="Okumura E."/>
            <person name="Hosoya T."/>
            <person name="Hirota T."/>
            <person name="Kishimoto T."/>
        </authorList>
    </citation>
    <scope>NUCLEOTIDE SEQUENCE [MRNA]</scope>
    <scope>TISSUE SPECIFICITY</scope>
</reference>
<comment type="function">
    <text evidence="1">Spindle assembly factor. Required for normal assembly of mitotic spindles (By similarity).</text>
</comment>
<comment type="subcellular location">
    <subcellularLocation>
        <location evidence="1">Nucleus</location>
    </subcellularLocation>
    <subcellularLocation>
        <location evidence="1">Cytoplasm</location>
        <location evidence="1">Cytoskeleton</location>
        <location evidence="1">Spindle</location>
    </subcellularLocation>
</comment>
<comment type="tissue specificity">
    <text evidence="4">Detectable in immature oocytes.</text>
</comment>
<comment type="similarity">
    <text evidence="2">Belongs to the TPX2 family.</text>
</comment>
<feature type="chain" id="PRO_0000419527" description="Targeting protein for Xklp2 homolog">
    <location>
        <begin position="1"/>
        <end position="891"/>
    </location>
</feature>
<feature type="region of interest" description="Disordered" evidence="3">
    <location>
        <begin position="42"/>
        <end position="310"/>
    </location>
</feature>
<feature type="region of interest" description="Disordered" evidence="3">
    <location>
        <begin position="418"/>
        <end position="454"/>
    </location>
</feature>
<feature type="region of interest" description="Disordered" evidence="3">
    <location>
        <begin position="472"/>
        <end position="518"/>
    </location>
</feature>
<feature type="region of interest" description="Disordered" evidence="3">
    <location>
        <begin position="723"/>
        <end position="746"/>
    </location>
</feature>
<feature type="region of interest" description="Disordered" evidence="3">
    <location>
        <begin position="789"/>
        <end position="891"/>
    </location>
</feature>
<feature type="compositionally biased region" description="Basic and acidic residues" evidence="3">
    <location>
        <begin position="42"/>
        <end position="54"/>
    </location>
</feature>
<feature type="compositionally biased region" description="Polar residues" evidence="3">
    <location>
        <begin position="108"/>
        <end position="124"/>
    </location>
</feature>
<feature type="compositionally biased region" description="Acidic residues" evidence="3">
    <location>
        <begin position="141"/>
        <end position="154"/>
    </location>
</feature>
<feature type="compositionally biased region" description="Polar residues" evidence="3">
    <location>
        <begin position="155"/>
        <end position="173"/>
    </location>
</feature>
<feature type="compositionally biased region" description="Basic residues" evidence="3">
    <location>
        <begin position="236"/>
        <end position="246"/>
    </location>
</feature>
<feature type="compositionally biased region" description="Basic and acidic residues" evidence="3">
    <location>
        <begin position="442"/>
        <end position="454"/>
    </location>
</feature>
<feature type="compositionally biased region" description="Polar residues" evidence="3">
    <location>
        <begin position="791"/>
        <end position="802"/>
    </location>
</feature>
<feature type="compositionally biased region" description="Basic and acidic residues" evidence="3">
    <location>
        <begin position="803"/>
        <end position="822"/>
    </location>
</feature>
<feature type="compositionally biased region" description="Basic and acidic residues" evidence="3">
    <location>
        <begin position="831"/>
        <end position="852"/>
    </location>
</feature>
<sequence>MADVEMMEYVDDVYEMDCPKFVDFSVPQVVDDNADEWFNFDHENGVPLTFDDKAVSPTAKETPTSPLPQDPQESHSVIGHSETDTTLQESSAPEIATSEKQKYASPSDDVSSAESETCEMSTDSMQDKPAVPESAVRNVTDDEATVQESSDAEETQTLPSSCVDSSTAEMSTDSLEDKPQKPQMQESPKPRKRYGNLVTSFARRDEDTTTASSDHSEPEQKKPRSRQRSVEVVSRPTRKSPRLHSRRSAEPTRLKRPSITSQAVKRRSANSALGHPRSRVLSTDQPISKRRKIGSEITPAGRPDAKKSCPKLKAKINLTMPTTPTLLKRNLAKPNTQLKTTEQMELDRIAQFQHKLAAIRKKSALSYKAVKESVPVAPVHAAVQPTRPEEFKFETDARLKSHTMETRKDTKNKDFVGNLRKYVPSPSKPQGITKPRPFNFSDNRKRTHEESFSGEKKGYEFKATALAVSQFHTKTPDRFRSKPLSEQNKGPEPAHDRPKKAKLTQPMTPALESRNRHRPVTAISQAQREEQELADMKNYKFKARPVDPRVMSNIAVGVKTVHHKEPTKPIGFDLEIEKRLLERETNKVQTEERYEFRARPLPAKILAGPVGIAEAKAAAVTIPKSPAFALKERVKVYKEKEREKEKDSEHDNSHIIKARPILHAGVPFMPNIQHKRTEPEPFSFDEKIQESKARKEAKIQETLREEERARQFRAQPLPDLTWCSGVPDKKVKPPTQMAPFSVAEKGAKQAEEWSKKMEEEIRDCKRMANAFKAKPANILYEEPFVPEKSTKPMTDISNFSLNTERRAEDRKGYEQAKYERQLAQDTAQAQREAEKEEELRQQISKQRADSIHKAKPVRHYKAVEVLPSTKPLTQPKTPKFSDRTRRSSHTS</sequence>
<name>TPX2_PATPE</name>
<gene>
    <name evidence="7" type="primary">TPX2</name>
</gene>
<dbReference type="EMBL" id="AB560815">
    <property type="protein sequence ID" value="BAJ24842.1"/>
    <property type="molecule type" value="mRNA"/>
</dbReference>
<dbReference type="SMR" id="E2RYF8"/>
<dbReference type="GO" id="GO:0005737">
    <property type="term" value="C:cytoplasm"/>
    <property type="evidence" value="ECO:0007669"/>
    <property type="project" value="UniProtKB-KW"/>
</dbReference>
<dbReference type="GO" id="GO:0005874">
    <property type="term" value="C:microtubule"/>
    <property type="evidence" value="ECO:0007669"/>
    <property type="project" value="InterPro"/>
</dbReference>
<dbReference type="GO" id="GO:0005634">
    <property type="term" value="C:nucleus"/>
    <property type="evidence" value="ECO:0007669"/>
    <property type="project" value="UniProtKB-SubCell"/>
</dbReference>
<dbReference type="GO" id="GO:0005819">
    <property type="term" value="C:spindle"/>
    <property type="evidence" value="ECO:0007669"/>
    <property type="project" value="UniProtKB-SubCell"/>
</dbReference>
<dbReference type="GO" id="GO:0060236">
    <property type="term" value="P:regulation of mitotic spindle organization"/>
    <property type="evidence" value="ECO:0007669"/>
    <property type="project" value="InterPro"/>
</dbReference>
<dbReference type="InterPro" id="IPR027329">
    <property type="entry name" value="TPX2_C"/>
</dbReference>
<dbReference type="InterPro" id="IPR027330">
    <property type="entry name" value="TPX2_central_dom"/>
</dbReference>
<dbReference type="InterPro" id="IPR009675">
    <property type="entry name" value="TPX2_fam"/>
</dbReference>
<dbReference type="PANTHER" id="PTHR14326">
    <property type="entry name" value="TARGETING PROTEIN FOR XKLP2"/>
    <property type="match status" value="1"/>
</dbReference>
<dbReference type="PANTHER" id="PTHR14326:SF44">
    <property type="entry name" value="TARGETING PROTEIN FOR XKLP2"/>
    <property type="match status" value="1"/>
</dbReference>
<dbReference type="Pfam" id="PF06886">
    <property type="entry name" value="TPX2"/>
    <property type="match status" value="1"/>
</dbReference>
<dbReference type="Pfam" id="PF12214">
    <property type="entry name" value="TPX2_importin"/>
    <property type="match status" value="1"/>
</dbReference>
<organism>
    <name type="scientific">Patiria pectinifera</name>
    <name type="common">Starfish</name>
    <name type="synonym">Asterina pectinifera</name>
    <dbReference type="NCBI Taxonomy" id="7594"/>
    <lineage>
        <taxon>Eukaryota</taxon>
        <taxon>Metazoa</taxon>
        <taxon>Echinodermata</taxon>
        <taxon>Eleutherozoa</taxon>
        <taxon>Asterozoa</taxon>
        <taxon>Asteroidea</taxon>
        <taxon>Valvatacea</taxon>
        <taxon>Valvatida</taxon>
        <taxon>Asterinidae</taxon>
        <taxon>Patiria</taxon>
    </lineage>
</organism>